<protein>
    <recommendedName>
        <fullName>Cytochrome b</fullName>
    </recommendedName>
    <alternativeName>
        <fullName>Complex III subunit 3</fullName>
    </alternativeName>
    <alternativeName>
        <fullName>Complex III subunit III</fullName>
    </alternativeName>
    <alternativeName>
        <fullName>Cytochrome b-c1 complex subunit 3</fullName>
    </alternativeName>
    <alternativeName>
        <fullName>Ubiquinol-cytochrome-c reductase complex cytochrome b subunit</fullName>
    </alternativeName>
</protein>
<geneLocation type="mitochondrion"/>
<proteinExistence type="evidence at transcript level"/>
<feature type="chain" id="PRO_0000061223" description="Cytochrome b">
    <location>
        <begin position="1"/>
        <end position="379"/>
    </location>
</feature>
<feature type="transmembrane region" description="Helical" evidence="2">
    <location>
        <begin position="33"/>
        <end position="53"/>
    </location>
</feature>
<feature type="transmembrane region" description="Helical" evidence="2">
    <location>
        <begin position="77"/>
        <end position="98"/>
    </location>
</feature>
<feature type="transmembrane region" description="Helical" evidence="2">
    <location>
        <begin position="113"/>
        <end position="133"/>
    </location>
</feature>
<feature type="transmembrane region" description="Helical" evidence="2">
    <location>
        <begin position="178"/>
        <end position="198"/>
    </location>
</feature>
<feature type="transmembrane region" description="Helical" evidence="2">
    <location>
        <begin position="226"/>
        <end position="246"/>
    </location>
</feature>
<feature type="transmembrane region" description="Helical" evidence="2">
    <location>
        <begin position="288"/>
        <end position="308"/>
    </location>
</feature>
<feature type="transmembrane region" description="Helical" evidence="2">
    <location>
        <begin position="320"/>
        <end position="340"/>
    </location>
</feature>
<feature type="transmembrane region" description="Helical" evidence="2">
    <location>
        <begin position="347"/>
        <end position="367"/>
    </location>
</feature>
<feature type="binding site" description="axial binding residue" evidence="2">
    <location>
        <position position="83"/>
    </location>
    <ligand>
        <name>heme b</name>
        <dbReference type="ChEBI" id="CHEBI:60344"/>
        <label>b562</label>
    </ligand>
    <ligandPart>
        <name>Fe</name>
        <dbReference type="ChEBI" id="CHEBI:18248"/>
    </ligandPart>
</feature>
<feature type="binding site" description="axial binding residue" evidence="2">
    <location>
        <position position="97"/>
    </location>
    <ligand>
        <name>heme b</name>
        <dbReference type="ChEBI" id="CHEBI:60344"/>
        <label>b566</label>
    </ligand>
    <ligandPart>
        <name>Fe</name>
        <dbReference type="ChEBI" id="CHEBI:18248"/>
    </ligandPart>
</feature>
<feature type="binding site" description="axial binding residue" evidence="2">
    <location>
        <position position="182"/>
    </location>
    <ligand>
        <name>heme b</name>
        <dbReference type="ChEBI" id="CHEBI:60344"/>
        <label>b562</label>
    </ligand>
    <ligandPart>
        <name>Fe</name>
        <dbReference type="ChEBI" id="CHEBI:18248"/>
    </ligandPart>
</feature>
<feature type="binding site" description="axial binding residue" evidence="2">
    <location>
        <position position="196"/>
    </location>
    <ligand>
        <name>heme b</name>
        <dbReference type="ChEBI" id="CHEBI:60344"/>
        <label>b566</label>
    </ligand>
    <ligandPart>
        <name>Fe</name>
        <dbReference type="ChEBI" id="CHEBI:18248"/>
    </ligandPart>
</feature>
<feature type="binding site" evidence="2">
    <location>
        <position position="201"/>
    </location>
    <ligand>
        <name>a ubiquinone</name>
        <dbReference type="ChEBI" id="CHEBI:16389"/>
    </ligand>
</feature>
<reference key="1">
    <citation type="submission" date="2000-07" db="EMBL/GenBank/DDBJ databases">
        <title>Occurrence of Mustela nivalis in Taiwan and a molecular phylogenetic perspective.</title>
        <authorList>
            <person name="Hosoda T."/>
            <person name="Suzuki H."/>
            <person name="Harada M."/>
            <person name="Iwasa M.A."/>
            <person name="Tsuchiya K."/>
            <person name="Lin L."/>
        </authorList>
    </citation>
    <scope>NUCLEOTIDE SEQUENCE [GENOMIC DNA]</scope>
    <source>
        <strain>Isolate TH133</strain>
    </source>
</reference>
<reference key="2">
    <citation type="journal article" date="2002" name="Mol. Ecol.">
        <title>Phylogeography of endemic ermine (Mustela erminea) in southeast Alaska.</title>
        <authorList>
            <person name="Fleming M.A."/>
            <person name="Cook J.A."/>
        </authorList>
    </citation>
    <scope>NUCLEOTIDE SEQUENCE [MRNA]</scope>
</reference>
<name>CYB_MUSNI</name>
<keyword id="KW-0249">Electron transport</keyword>
<keyword id="KW-0349">Heme</keyword>
<keyword id="KW-0408">Iron</keyword>
<keyword id="KW-0472">Membrane</keyword>
<keyword id="KW-0479">Metal-binding</keyword>
<keyword id="KW-0496">Mitochondrion</keyword>
<keyword id="KW-0999">Mitochondrion inner membrane</keyword>
<keyword id="KW-0679">Respiratory chain</keyword>
<keyword id="KW-0812">Transmembrane</keyword>
<keyword id="KW-1133">Transmembrane helix</keyword>
<keyword id="KW-0813">Transport</keyword>
<keyword id="KW-0830">Ubiquinone</keyword>
<dbReference type="EMBL" id="AB046612">
    <property type="protein sequence ID" value="BAB03463.1"/>
    <property type="molecule type" value="Genomic_DNA"/>
</dbReference>
<dbReference type="EMBL" id="AF457461">
    <property type="protein sequence ID" value="AAM46760.1"/>
    <property type="molecule type" value="mRNA"/>
</dbReference>
<dbReference type="RefSeq" id="YP_007625275.1">
    <property type="nucleotide sequence ID" value="NC_020639.1"/>
</dbReference>
<dbReference type="SMR" id="Q9MIZ2"/>
<dbReference type="GeneID" id="14841823"/>
<dbReference type="CTD" id="4519"/>
<dbReference type="GO" id="GO:0005743">
    <property type="term" value="C:mitochondrial inner membrane"/>
    <property type="evidence" value="ECO:0007669"/>
    <property type="project" value="UniProtKB-SubCell"/>
</dbReference>
<dbReference type="GO" id="GO:0045275">
    <property type="term" value="C:respiratory chain complex III"/>
    <property type="evidence" value="ECO:0007669"/>
    <property type="project" value="InterPro"/>
</dbReference>
<dbReference type="GO" id="GO:0046872">
    <property type="term" value="F:metal ion binding"/>
    <property type="evidence" value="ECO:0007669"/>
    <property type="project" value="UniProtKB-KW"/>
</dbReference>
<dbReference type="GO" id="GO:0008121">
    <property type="term" value="F:ubiquinol-cytochrome-c reductase activity"/>
    <property type="evidence" value="ECO:0007669"/>
    <property type="project" value="InterPro"/>
</dbReference>
<dbReference type="GO" id="GO:0006122">
    <property type="term" value="P:mitochondrial electron transport, ubiquinol to cytochrome c"/>
    <property type="evidence" value="ECO:0007669"/>
    <property type="project" value="TreeGrafter"/>
</dbReference>
<dbReference type="CDD" id="cd00290">
    <property type="entry name" value="cytochrome_b_C"/>
    <property type="match status" value="1"/>
</dbReference>
<dbReference type="CDD" id="cd00284">
    <property type="entry name" value="Cytochrome_b_N"/>
    <property type="match status" value="1"/>
</dbReference>
<dbReference type="FunFam" id="1.20.810.10:FF:000002">
    <property type="entry name" value="Cytochrome b"/>
    <property type="match status" value="1"/>
</dbReference>
<dbReference type="Gene3D" id="1.20.810.10">
    <property type="entry name" value="Cytochrome Bc1 Complex, Chain C"/>
    <property type="match status" value="1"/>
</dbReference>
<dbReference type="InterPro" id="IPR005798">
    <property type="entry name" value="Cyt_b/b6_C"/>
</dbReference>
<dbReference type="InterPro" id="IPR036150">
    <property type="entry name" value="Cyt_b/b6_C_sf"/>
</dbReference>
<dbReference type="InterPro" id="IPR005797">
    <property type="entry name" value="Cyt_b/b6_N"/>
</dbReference>
<dbReference type="InterPro" id="IPR027387">
    <property type="entry name" value="Cytb/b6-like_sf"/>
</dbReference>
<dbReference type="InterPro" id="IPR030689">
    <property type="entry name" value="Cytochrome_b"/>
</dbReference>
<dbReference type="InterPro" id="IPR048260">
    <property type="entry name" value="Cytochrome_b_C_euk/bac"/>
</dbReference>
<dbReference type="InterPro" id="IPR048259">
    <property type="entry name" value="Cytochrome_b_N_euk/bac"/>
</dbReference>
<dbReference type="InterPro" id="IPR016174">
    <property type="entry name" value="Di-haem_cyt_TM"/>
</dbReference>
<dbReference type="PANTHER" id="PTHR19271">
    <property type="entry name" value="CYTOCHROME B"/>
    <property type="match status" value="1"/>
</dbReference>
<dbReference type="PANTHER" id="PTHR19271:SF16">
    <property type="entry name" value="CYTOCHROME B"/>
    <property type="match status" value="1"/>
</dbReference>
<dbReference type="Pfam" id="PF00032">
    <property type="entry name" value="Cytochrom_B_C"/>
    <property type="match status" value="1"/>
</dbReference>
<dbReference type="Pfam" id="PF00033">
    <property type="entry name" value="Cytochrome_B"/>
    <property type="match status" value="1"/>
</dbReference>
<dbReference type="PIRSF" id="PIRSF038885">
    <property type="entry name" value="COB"/>
    <property type="match status" value="1"/>
</dbReference>
<dbReference type="SUPFAM" id="SSF81648">
    <property type="entry name" value="a domain/subunit of cytochrome bc1 complex (Ubiquinol-cytochrome c reductase)"/>
    <property type="match status" value="1"/>
</dbReference>
<dbReference type="SUPFAM" id="SSF81342">
    <property type="entry name" value="Transmembrane di-heme cytochromes"/>
    <property type="match status" value="1"/>
</dbReference>
<dbReference type="PROSITE" id="PS51003">
    <property type="entry name" value="CYTB_CTER"/>
    <property type="match status" value="1"/>
</dbReference>
<dbReference type="PROSITE" id="PS51002">
    <property type="entry name" value="CYTB_NTER"/>
    <property type="match status" value="1"/>
</dbReference>
<accession>Q9MIZ2</accession>
<organism>
    <name type="scientific">Mustela nivalis</name>
    <name type="common">Least weasel</name>
    <dbReference type="NCBI Taxonomy" id="36239"/>
    <lineage>
        <taxon>Eukaryota</taxon>
        <taxon>Metazoa</taxon>
        <taxon>Chordata</taxon>
        <taxon>Craniata</taxon>
        <taxon>Vertebrata</taxon>
        <taxon>Euteleostomi</taxon>
        <taxon>Mammalia</taxon>
        <taxon>Eutheria</taxon>
        <taxon>Laurasiatheria</taxon>
        <taxon>Carnivora</taxon>
        <taxon>Caniformia</taxon>
        <taxon>Musteloidea</taxon>
        <taxon>Mustelidae</taxon>
        <taxon>Mustelinae</taxon>
        <taxon>Mustela</taxon>
    </lineage>
</organism>
<comment type="function">
    <text evidence="2">Component of the ubiquinol-cytochrome c reductase complex (complex III or cytochrome b-c1 complex) that is part of the mitochondrial respiratory chain. The b-c1 complex mediates electron transfer from ubiquinol to cytochrome c. Contributes to the generation of a proton gradient across the mitochondrial membrane that is then used for ATP synthesis.</text>
</comment>
<comment type="cofactor">
    <cofactor evidence="2">
        <name>heme b</name>
        <dbReference type="ChEBI" id="CHEBI:60344"/>
    </cofactor>
    <text evidence="2">Binds 2 heme b groups non-covalently.</text>
</comment>
<comment type="subunit">
    <text evidence="2">The cytochrome bc1 complex contains 11 subunits: 3 respiratory subunits (MT-CYB, CYC1 and UQCRFS1), 2 core proteins (UQCRC1 and UQCRC2) and 6 low-molecular weight proteins (UQCRH/QCR6, UQCRB/QCR7, UQCRQ/QCR8, UQCR10/QCR9, UQCR11/QCR10 and a cleavage product of UQCRFS1). This cytochrome bc1 complex then forms a dimer.</text>
</comment>
<comment type="subcellular location">
    <subcellularLocation>
        <location evidence="2">Mitochondrion inner membrane</location>
        <topology evidence="2">Multi-pass membrane protein</topology>
    </subcellularLocation>
</comment>
<comment type="miscellaneous">
    <text evidence="1">Heme 1 (or BL or b562) is low-potential and absorbs at about 562 nm, and heme 2 (or BH or b566) is high-potential and absorbs at about 566 nm.</text>
</comment>
<comment type="similarity">
    <text evidence="3 4">Belongs to the cytochrome b family.</text>
</comment>
<comment type="caution">
    <text evidence="2">The full-length protein contains only eight transmembrane helices, not nine as predicted by bioinformatics tools.</text>
</comment>
<gene>
    <name type="primary">MT-CYB</name>
    <name type="synonym">COB</name>
    <name type="synonym">CYTB</name>
    <name type="synonym">MTCYB</name>
</gene>
<sequence length="379" mass="42677">MTNIRKTHPLTKIINNSFIDLPAPSNISAWWNFGSLLGICLIIQILTGLFLAMHYTSDTATAFSSVTHICRDVNYGWIIRYMHANGASMFFICLFLHVGRGLYYGSYMFSETWNIGIILLFAVMATAFMGYVLPWGQMSFWGATVITNLLSAIPYIGTNLVEWIWGGFSVDKATLTRFFAFHFILPFIISALAAVHLLFLHETGSNNPSGIPSDSDKIPFHPYYTIKDILGALFLILTLMLLVLFSPDLLGDPDNYIPANPLNTPPHIKPEWYFLFAYAILRSIPNKLGGVLALVFSILVLAIIPLLHTSKQRSMMFRPLSQCLFWLLVADLLTLTWIGGQPVEHPFVTIGQLASILYFMILLVLMPIISIIENNMLKW</sequence>
<evidence type="ECO:0000250" key="1"/>
<evidence type="ECO:0000250" key="2">
    <source>
        <dbReference type="UniProtKB" id="P00157"/>
    </source>
</evidence>
<evidence type="ECO:0000255" key="3">
    <source>
        <dbReference type="PROSITE-ProRule" id="PRU00967"/>
    </source>
</evidence>
<evidence type="ECO:0000255" key="4">
    <source>
        <dbReference type="PROSITE-ProRule" id="PRU00968"/>
    </source>
</evidence>